<feature type="chain" id="PRO_0000064439" description="Arsenical-resistance protein 2">
    <location>
        <begin position="1"/>
        <end position="130"/>
    </location>
</feature>
<feature type="domain" description="Rhodanese" evidence="1">
    <location>
        <begin position="17"/>
        <end position="124"/>
    </location>
</feature>
<keyword id="KW-0059">Arsenical resistance</keyword>
<keyword id="KW-1185">Reference proteome</keyword>
<proteinExistence type="predicted"/>
<accession>Q06597</accession>
<accession>D6W4J8</accession>
<sequence length="130" mass="14883">MVSFITSRQLKGLIENQRKDFQVVDLRREDFARDHITNAWHVPVTAQITEKQLNQLIKGLSDTFSSSQFVKVIFHCTGSKNRGPKVAAKFETYLQEEDITSKFESCILVGGFYAWETHCRESNLKLIVSG</sequence>
<reference key="1">
    <citation type="journal article" date="1997" name="Yeast">
        <title>Isolation of three contiguous genes, ACR1, ACR2 and ACR3, involved in resistance to arsenic compounds in the yeast Saccharomyces cerevisiae.</title>
        <authorList>
            <person name="Bobrowicz P."/>
            <person name="Wysocki R."/>
            <person name="Owsianik G."/>
            <person name="Goffeau A."/>
            <person name="Ulaszewski S."/>
        </authorList>
    </citation>
    <scope>NUCLEOTIDE SEQUENCE [GENOMIC DNA]</scope>
    <scope>FUNCTION</scope>
</reference>
<reference key="2">
    <citation type="journal article" date="1997" name="Nature">
        <title>The nucleotide sequence of Saccharomyces cerevisiae chromosome XVI.</title>
        <authorList>
            <person name="Bussey H."/>
            <person name="Storms R.K."/>
            <person name="Ahmed A."/>
            <person name="Albermann K."/>
            <person name="Allen E."/>
            <person name="Ansorge W."/>
            <person name="Araujo R."/>
            <person name="Aparicio A."/>
            <person name="Barrell B.G."/>
            <person name="Badcock K."/>
            <person name="Benes V."/>
            <person name="Botstein D."/>
            <person name="Bowman S."/>
            <person name="Brueckner M."/>
            <person name="Carpenter J."/>
            <person name="Cherry J.M."/>
            <person name="Chung E."/>
            <person name="Churcher C.M."/>
            <person name="Coster F."/>
            <person name="Davis K."/>
            <person name="Davis R.W."/>
            <person name="Dietrich F.S."/>
            <person name="Delius H."/>
            <person name="DiPaolo T."/>
            <person name="Dubois E."/>
            <person name="Duesterhoeft A."/>
            <person name="Duncan M."/>
            <person name="Floeth M."/>
            <person name="Fortin N."/>
            <person name="Friesen J.D."/>
            <person name="Fritz C."/>
            <person name="Goffeau A."/>
            <person name="Hall J."/>
            <person name="Hebling U."/>
            <person name="Heumann K."/>
            <person name="Hilbert H."/>
            <person name="Hillier L.W."/>
            <person name="Hunicke-Smith S."/>
            <person name="Hyman R.W."/>
            <person name="Johnston M."/>
            <person name="Kalman S."/>
            <person name="Kleine K."/>
            <person name="Komp C."/>
            <person name="Kurdi O."/>
            <person name="Lashkari D."/>
            <person name="Lew H."/>
            <person name="Lin A."/>
            <person name="Lin D."/>
            <person name="Louis E.J."/>
            <person name="Marathe R."/>
            <person name="Messenguy F."/>
            <person name="Mewes H.-W."/>
            <person name="Mirtipati S."/>
            <person name="Moestl D."/>
            <person name="Mueller-Auer S."/>
            <person name="Namath A."/>
            <person name="Nentwich U."/>
            <person name="Oefner P."/>
            <person name="Pearson D."/>
            <person name="Petel F.X."/>
            <person name="Pohl T.M."/>
            <person name="Purnelle B."/>
            <person name="Rajandream M.A."/>
            <person name="Rechmann S."/>
            <person name="Rieger M."/>
            <person name="Riles L."/>
            <person name="Roberts D."/>
            <person name="Schaefer M."/>
            <person name="Scharfe M."/>
            <person name="Scherens B."/>
            <person name="Schramm S."/>
            <person name="Schroeder M."/>
            <person name="Sdicu A.-M."/>
            <person name="Tettelin H."/>
            <person name="Urrestarazu L.A."/>
            <person name="Ushinsky S."/>
            <person name="Vierendeels F."/>
            <person name="Vissers S."/>
            <person name="Voss H."/>
            <person name="Walsh S.V."/>
            <person name="Wambutt R."/>
            <person name="Wang Y."/>
            <person name="Wedler E."/>
            <person name="Wedler H."/>
            <person name="Winnett E."/>
            <person name="Zhong W.-W."/>
            <person name="Zollner A."/>
            <person name="Vo D.H."/>
            <person name="Hani J."/>
        </authorList>
    </citation>
    <scope>NUCLEOTIDE SEQUENCE [LARGE SCALE GENOMIC DNA]</scope>
    <source>
        <strain>ATCC 204508 / S288c</strain>
    </source>
</reference>
<reference key="3">
    <citation type="journal article" date="2014" name="G3 (Bethesda)">
        <title>The reference genome sequence of Saccharomyces cerevisiae: Then and now.</title>
        <authorList>
            <person name="Engel S.R."/>
            <person name="Dietrich F.S."/>
            <person name="Fisk D.G."/>
            <person name="Binkley G."/>
            <person name="Balakrishnan R."/>
            <person name="Costanzo M.C."/>
            <person name="Dwight S.S."/>
            <person name="Hitz B.C."/>
            <person name="Karra K."/>
            <person name="Nash R.S."/>
            <person name="Weng S."/>
            <person name="Wong E.D."/>
            <person name="Lloyd P."/>
            <person name="Skrzypek M.S."/>
            <person name="Miyasato S.R."/>
            <person name="Simison M."/>
            <person name="Cherry J.M."/>
        </authorList>
    </citation>
    <scope>GENOME REANNOTATION</scope>
    <source>
        <strain>ATCC 204508 / S288c</strain>
    </source>
</reference>
<reference key="4">
    <citation type="journal article" date="2007" name="Genome Res.">
        <title>Approaching a complete repository of sequence-verified protein-encoding clones for Saccharomyces cerevisiae.</title>
        <authorList>
            <person name="Hu Y."/>
            <person name="Rolfs A."/>
            <person name="Bhullar B."/>
            <person name="Murthy T.V.S."/>
            <person name="Zhu C."/>
            <person name="Berger M.F."/>
            <person name="Camargo A.A."/>
            <person name="Kelley F."/>
            <person name="McCarron S."/>
            <person name="Jepson D."/>
            <person name="Richardson A."/>
            <person name="Raphael J."/>
            <person name="Moreira D."/>
            <person name="Taycher E."/>
            <person name="Zuo D."/>
            <person name="Mohr S."/>
            <person name="Kane M.F."/>
            <person name="Williamson J."/>
            <person name="Simpson A.J.G."/>
            <person name="Bulyk M.L."/>
            <person name="Harlow E."/>
            <person name="Marsischky G."/>
            <person name="Kolodner R.D."/>
            <person name="LaBaer J."/>
        </authorList>
    </citation>
    <scope>NUCLEOTIDE SEQUENCE [GENOMIC DNA]</scope>
    <source>
        <strain>ATCC 204508 / S288c</strain>
    </source>
</reference>
<evidence type="ECO:0000255" key="1">
    <source>
        <dbReference type="PROSITE-ProRule" id="PRU00173"/>
    </source>
</evidence>
<evidence type="ECO:0000269" key="2">
    <source>
    </source>
</evidence>
<dbReference type="EMBL" id="U25841">
    <property type="protein sequence ID" value="AAB64628.1"/>
    <property type="molecule type" value="Genomic_DNA"/>
</dbReference>
<dbReference type="EMBL" id="AY558053">
    <property type="protein sequence ID" value="AAS56379.1"/>
    <property type="molecule type" value="Genomic_DNA"/>
</dbReference>
<dbReference type="EMBL" id="BK006949">
    <property type="protein sequence ID" value="DAA11614.1"/>
    <property type="molecule type" value="Genomic_DNA"/>
</dbReference>
<dbReference type="PIR" id="S58829">
    <property type="entry name" value="S58829"/>
</dbReference>
<dbReference type="RefSeq" id="NP_015526.1">
    <property type="nucleotide sequence ID" value="NM_001184297.1"/>
</dbReference>
<dbReference type="SMR" id="Q06597"/>
<dbReference type="BioGRID" id="36370">
    <property type="interactions" value="28"/>
</dbReference>
<dbReference type="FunCoup" id="Q06597">
    <property type="interactions" value="123"/>
</dbReference>
<dbReference type="IntAct" id="Q06597">
    <property type="interactions" value="3"/>
</dbReference>
<dbReference type="STRING" id="4932.YPR200C"/>
<dbReference type="PaxDb" id="4932-YPR200C"/>
<dbReference type="EnsemblFungi" id="YPR200C_mRNA">
    <property type="protein sequence ID" value="YPR200C"/>
    <property type="gene ID" value="YPR200C"/>
</dbReference>
<dbReference type="GeneID" id="856330"/>
<dbReference type="KEGG" id="sce:YPR200C"/>
<dbReference type="AGR" id="SGD:S000006404"/>
<dbReference type="SGD" id="S000006404">
    <property type="gene designation" value="ARR2"/>
</dbReference>
<dbReference type="VEuPathDB" id="FungiDB:YPR200C"/>
<dbReference type="eggNOG" id="KOG3772">
    <property type="taxonomic scope" value="Eukaryota"/>
</dbReference>
<dbReference type="GeneTree" id="ENSGT00940000176483"/>
<dbReference type="HOGENOM" id="CLU_107716_1_1_1"/>
<dbReference type="InParanoid" id="Q06597"/>
<dbReference type="OMA" id="GHIKGAW"/>
<dbReference type="OrthoDB" id="8300214at2759"/>
<dbReference type="BioCyc" id="MetaCyc:G3O-34320-MONOMER"/>
<dbReference type="BioCyc" id="YEAST:G3O-34320-MONOMER"/>
<dbReference type="SABIO-RK" id="Q06597"/>
<dbReference type="BioGRID-ORCS" id="856330">
    <property type="hits" value="3 hits in 10 CRISPR screens"/>
</dbReference>
<dbReference type="PRO" id="PR:Q06597"/>
<dbReference type="Proteomes" id="UP000002311">
    <property type="component" value="Chromosome XVI"/>
</dbReference>
<dbReference type="RNAct" id="Q06597">
    <property type="molecule type" value="protein"/>
</dbReference>
<dbReference type="GO" id="GO:0005737">
    <property type="term" value="C:cytoplasm"/>
    <property type="evidence" value="ECO:0000318"/>
    <property type="project" value="GO_Central"/>
</dbReference>
<dbReference type="GO" id="GO:0005634">
    <property type="term" value="C:nucleus"/>
    <property type="evidence" value="ECO:0000318"/>
    <property type="project" value="GO_Central"/>
</dbReference>
<dbReference type="GO" id="GO:0030611">
    <property type="term" value="F:arsenate reductase activity"/>
    <property type="evidence" value="ECO:0000314"/>
    <property type="project" value="SGD"/>
</dbReference>
<dbReference type="GO" id="GO:0004725">
    <property type="term" value="F:protein tyrosine phosphatase activity"/>
    <property type="evidence" value="ECO:0000318"/>
    <property type="project" value="GO_Central"/>
</dbReference>
<dbReference type="GO" id="GO:0046685">
    <property type="term" value="P:response to arsenic-containing substance"/>
    <property type="evidence" value="ECO:0000304"/>
    <property type="project" value="SGD"/>
</dbReference>
<dbReference type="CDD" id="cd01531">
    <property type="entry name" value="Acr2p"/>
    <property type="match status" value="1"/>
</dbReference>
<dbReference type="FunFam" id="3.40.250.10:FF:000081">
    <property type="entry name" value="Arr2p"/>
    <property type="match status" value="1"/>
</dbReference>
<dbReference type="Gene3D" id="3.40.250.10">
    <property type="entry name" value="Rhodanese-like domain"/>
    <property type="match status" value="1"/>
</dbReference>
<dbReference type="InterPro" id="IPR001763">
    <property type="entry name" value="Rhodanese-like_dom"/>
</dbReference>
<dbReference type="InterPro" id="IPR036873">
    <property type="entry name" value="Rhodanese-like_dom_sf"/>
</dbReference>
<dbReference type="PANTHER" id="PTHR10828:SF38">
    <property type="entry name" value="ARSENICAL-RESISTANCE PROTEIN 2-RELATED"/>
    <property type="match status" value="1"/>
</dbReference>
<dbReference type="PANTHER" id="PTHR10828">
    <property type="entry name" value="M-PHASE INDUCER PHOSPHATASE DUAL SPECIFICITY PHOSPHATASE CDC25"/>
    <property type="match status" value="1"/>
</dbReference>
<dbReference type="Pfam" id="PF00581">
    <property type="entry name" value="Rhodanese"/>
    <property type="match status" value="1"/>
</dbReference>
<dbReference type="SMART" id="SM00450">
    <property type="entry name" value="RHOD"/>
    <property type="match status" value="1"/>
</dbReference>
<dbReference type="SUPFAM" id="SSF52821">
    <property type="entry name" value="Rhodanese/Cell cycle control phosphatase"/>
    <property type="match status" value="1"/>
</dbReference>
<dbReference type="PROSITE" id="PS50206">
    <property type="entry name" value="RHODANESE_3"/>
    <property type="match status" value="1"/>
</dbReference>
<name>ARR2_YEAST</name>
<gene>
    <name type="primary">ARR2</name>
    <name type="synonym">ACR2</name>
    <name type="ordered locus">YPR200C</name>
    <name type="ORF">P9677.16</name>
</gene>
<organism>
    <name type="scientific">Saccharomyces cerevisiae (strain ATCC 204508 / S288c)</name>
    <name type="common">Baker's yeast</name>
    <dbReference type="NCBI Taxonomy" id="559292"/>
    <lineage>
        <taxon>Eukaryota</taxon>
        <taxon>Fungi</taxon>
        <taxon>Dikarya</taxon>
        <taxon>Ascomycota</taxon>
        <taxon>Saccharomycotina</taxon>
        <taxon>Saccharomycetes</taxon>
        <taxon>Saccharomycetales</taxon>
        <taxon>Saccharomycetaceae</taxon>
        <taxon>Saccharomyces</taxon>
    </lineage>
</organism>
<protein>
    <recommendedName>
        <fullName>Arsenical-resistance protein 2</fullName>
    </recommendedName>
</protein>
<comment type="function">
    <text evidence="2">Involved in resistance to arsenic compounds.</text>
</comment>